<dbReference type="EMBL" id="CP000562">
    <property type="protein sequence ID" value="ABN57599.1"/>
    <property type="molecule type" value="Genomic_DNA"/>
</dbReference>
<dbReference type="RefSeq" id="WP_011844510.1">
    <property type="nucleotide sequence ID" value="NC_009051.1"/>
</dbReference>
<dbReference type="SMR" id="A3CW49"/>
<dbReference type="STRING" id="368407.Memar_1672"/>
<dbReference type="GeneID" id="4846674"/>
<dbReference type="KEGG" id="mem:Memar_1672"/>
<dbReference type="eggNOG" id="arCOG01342">
    <property type="taxonomic scope" value="Archaea"/>
</dbReference>
<dbReference type="HOGENOM" id="CLU_131909_0_0_2"/>
<dbReference type="OrthoDB" id="107608at2157"/>
<dbReference type="Proteomes" id="UP000002146">
    <property type="component" value="Chromosome"/>
</dbReference>
<dbReference type="GO" id="GO:0005737">
    <property type="term" value="C:cytoplasm"/>
    <property type="evidence" value="ECO:0007669"/>
    <property type="project" value="UniProtKB-SubCell"/>
</dbReference>
<dbReference type="GO" id="GO:0016272">
    <property type="term" value="C:prefoldin complex"/>
    <property type="evidence" value="ECO:0007669"/>
    <property type="project" value="UniProtKB-UniRule"/>
</dbReference>
<dbReference type="GO" id="GO:0044183">
    <property type="term" value="F:protein folding chaperone"/>
    <property type="evidence" value="ECO:0007669"/>
    <property type="project" value="TreeGrafter"/>
</dbReference>
<dbReference type="GO" id="GO:0051082">
    <property type="term" value="F:unfolded protein binding"/>
    <property type="evidence" value="ECO:0007669"/>
    <property type="project" value="UniProtKB-UniRule"/>
</dbReference>
<dbReference type="CDD" id="cd23162">
    <property type="entry name" value="Prefoldin_beta_GimC"/>
    <property type="match status" value="1"/>
</dbReference>
<dbReference type="Gene3D" id="1.10.287.370">
    <property type="match status" value="1"/>
</dbReference>
<dbReference type="HAMAP" id="MF_00307">
    <property type="entry name" value="PfdB"/>
    <property type="match status" value="1"/>
</dbReference>
<dbReference type="InterPro" id="IPR002777">
    <property type="entry name" value="PFD_beta-like"/>
</dbReference>
<dbReference type="InterPro" id="IPR012713">
    <property type="entry name" value="PfdB"/>
</dbReference>
<dbReference type="InterPro" id="IPR009053">
    <property type="entry name" value="Prefoldin"/>
</dbReference>
<dbReference type="NCBIfam" id="TIGR02338">
    <property type="entry name" value="gimC_beta"/>
    <property type="match status" value="1"/>
</dbReference>
<dbReference type="PANTHER" id="PTHR20903:SF0">
    <property type="entry name" value="PREFOLDIN SUBUNIT 1"/>
    <property type="match status" value="1"/>
</dbReference>
<dbReference type="PANTHER" id="PTHR20903">
    <property type="entry name" value="PREFOLDIN SUBUNIT 1-RELATED"/>
    <property type="match status" value="1"/>
</dbReference>
<dbReference type="Pfam" id="PF01920">
    <property type="entry name" value="Prefoldin_2"/>
    <property type="match status" value="1"/>
</dbReference>
<dbReference type="SUPFAM" id="SSF46579">
    <property type="entry name" value="Prefoldin"/>
    <property type="match status" value="1"/>
</dbReference>
<keyword id="KW-0143">Chaperone</keyword>
<keyword id="KW-0963">Cytoplasm</keyword>
<sequence length="121" mass="13632">MENIPPKVQNQLAMLQQMQQQLQTVVSQKGQYELTIREARRAVEDLADVPEDAAVFMNVGSVMMQKSKEQVLASLNERIETLELRVKSLEKQEKALQGRFEQLSSQIRGALEGKQQPPGPA</sequence>
<comment type="function">
    <text evidence="1">Molecular chaperone capable of stabilizing a range of proteins. Seems to fulfill an ATP-independent, HSP70-like function in archaeal de novo protein folding.</text>
</comment>
<comment type="subunit">
    <text evidence="1">Heterohexamer of two alpha and four beta subunits.</text>
</comment>
<comment type="subcellular location">
    <subcellularLocation>
        <location evidence="1">Cytoplasm</location>
    </subcellularLocation>
</comment>
<comment type="similarity">
    <text evidence="1">Belongs to the prefoldin subunit beta family.</text>
</comment>
<accession>A3CW49</accession>
<proteinExistence type="inferred from homology"/>
<organism>
    <name type="scientific">Methanoculleus marisnigri (strain ATCC 35101 / DSM 1498 / JR1)</name>
    <dbReference type="NCBI Taxonomy" id="368407"/>
    <lineage>
        <taxon>Archaea</taxon>
        <taxon>Methanobacteriati</taxon>
        <taxon>Methanobacteriota</taxon>
        <taxon>Stenosarchaea group</taxon>
        <taxon>Methanomicrobia</taxon>
        <taxon>Methanomicrobiales</taxon>
        <taxon>Methanomicrobiaceae</taxon>
        <taxon>Methanoculleus</taxon>
    </lineage>
</organism>
<protein>
    <recommendedName>
        <fullName evidence="1">Prefoldin subunit beta</fullName>
    </recommendedName>
    <alternativeName>
        <fullName evidence="1">GimC subunit beta</fullName>
    </alternativeName>
</protein>
<name>PFDB_METMJ</name>
<feature type="chain" id="PRO_0000300774" description="Prefoldin subunit beta">
    <location>
        <begin position="1"/>
        <end position="121"/>
    </location>
</feature>
<reference key="1">
    <citation type="journal article" date="2009" name="Stand. Genomic Sci.">
        <title>Complete genome sequence of Methanoculleus marisnigri Romesser et al. 1981 type strain JR1.</title>
        <authorList>
            <person name="Anderson I.J."/>
            <person name="Sieprawska-Lupa M."/>
            <person name="Lapidus A."/>
            <person name="Nolan M."/>
            <person name="Copeland A."/>
            <person name="Glavina Del Rio T."/>
            <person name="Tice H."/>
            <person name="Dalin E."/>
            <person name="Barry K."/>
            <person name="Saunders E."/>
            <person name="Han C."/>
            <person name="Brettin T."/>
            <person name="Detter J.C."/>
            <person name="Bruce D."/>
            <person name="Mikhailova N."/>
            <person name="Pitluck S."/>
            <person name="Hauser L."/>
            <person name="Land M."/>
            <person name="Lucas S."/>
            <person name="Richardson P."/>
            <person name="Whitman W.B."/>
            <person name="Kyrpides N.C."/>
        </authorList>
    </citation>
    <scope>NUCLEOTIDE SEQUENCE [LARGE SCALE GENOMIC DNA]</scope>
    <source>
        <strain>ATCC 35101 / DSM 1498 / JR1</strain>
    </source>
</reference>
<evidence type="ECO:0000255" key="1">
    <source>
        <dbReference type="HAMAP-Rule" id="MF_00307"/>
    </source>
</evidence>
<gene>
    <name evidence="1" type="primary">pfdB</name>
    <name type="ordered locus">Memar_1672</name>
</gene>